<comment type="function">
    <text evidence="2">Component of the transport system for branched-chain amino acids (leucine, isoleucine and valine), which is coupled to a proton motive force.</text>
</comment>
<comment type="subcellular location">
    <subcellularLocation>
        <location evidence="2">Cell membrane</location>
        <topology evidence="2">Multi-pass membrane protein</topology>
    </subcellularLocation>
</comment>
<comment type="similarity">
    <text evidence="2">Belongs to the branched chain amino acid transporter family.</text>
</comment>
<dbReference type="EMBL" id="AE015929">
    <property type="protein sequence ID" value="AAO04687.1"/>
    <property type="molecule type" value="Genomic_DNA"/>
</dbReference>
<dbReference type="RefSeq" id="NP_764645.1">
    <property type="nucleotide sequence ID" value="NC_004461.1"/>
</dbReference>
<dbReference type="KEGG" id="sep:SE_1090"/>
<dbReference type="PATRIC" id="fig|176280.10.peg.1066"/>
<dbReference type="eggNOG" id="COG1114">
    <property type="taxonomic scope" value="Bacteria"/>
</dbReference>
<dbReference type="HOGENOM" id="CLU_036807_0_1_9"/>
<dbReference type="OrthoDB" id="9783920at2"/>
<dbReference type="Proteomes" id="UP000001411">
    <property type="component" value="Chromosome"/>
</dbReference>
<dbReference type="GO" id="GO:0005886">
    <property type="term" value="C:plasma membrane"/>
    <property type="evidence" value="ECO:0007669"/>
    <property type="project" value="UniProtKB-SubCell"/>
</dbReference>
<dbReference type="GO" id="GO:0015188">
    <property type="term" value="F:L-isoleucine transmembrane transporter activity"/>
    <property type="evidence" value="ECO:0007669"/>
    <property type="project" value="TreeGrafter"/>
</dbReference>
<dbReference type="GO" id="GO:0015190">
    <property type="term" value="F:L-leucine transmembrane transporter activity"/>
    <property type="evidence" value="ECO:0007669"/>
    <property type="project" value="TreeGrafter"/>
</dbReference>
<dbReference type="GO" id="GO:0005304">
    <property type="term" value="F:L-valine transmembrane transporter activity"/>
    <property type="evidence" value="ECO:0007669"/>
    <property type="project" value="TreeGrafter"/>
</dbReference>
<dbReference type="GO" id="GO:0015818">
    <property type="term" value="P:isoleucine transport"/>
    <property type="evidence" value="ECO:0007669"/>
    <property type="project" value="TreeGrafter"/>
</dbReference>
<dbReference type="GO" id="GO:0015820">
    <property type="term" value="P:L-leucine transport"/>
    <property type="evidence" value="ECO:0007669"/>
    <property type="project" value="TreeGrafter"/>
</dbReference>
<dbReference type="Gene3D" id="1.20.1740.10">
    <property type="entry name" value="Amino acid/polyamine transporter I"/>
    <property type="match status" value="1"/>
</dbReference>
<dbReference type="InterPro" id="IPR004685">
    <property type="entry name" value="Brnchd-chn_aa_trnsp_Livcs"/>
</dbReference>
<dbReference type="NCBIfam" id="TIGR00796">
    <property type="entry name" value="livcs"/>
    <property type="match status" value="1"/>
</dbReference>
<dbReference type="PANTHER" id="PTHR30588:SF7">
    <property type="entry name" value="BRANCHED-CHAIN AMINO ACID CARRIER PROTEIN SAOUHSC_01411-RELATED"/>
    <property type="match status" value="1"/>
</dbReference>
<dbReference type="PANTHER" id="PTHR30588">
    <property type="entry name" value="BRANCHED-CHAIN AMINO ACID TRANSPORT SYSTEM 2 CARRIER PROTEIN"/>
    <property type="match status" value="1"/>
</dbReference>
<dbReference type="Pfam" id="PF05525">
    <property type="entry name" value="Branch_AA_trans"/>
    <property type="match status" value="1"/>
</dbReference>
<reference key="1">
    <citation type="journal article" date="2003" name="Mol. Microbiol.">
        <title>Genome-based analysis of virulence genes in a non-biofilm-forming Staphylococcus epidermidis strain (ATCC 12228).</title>
        <authorList>
            <person name="Zhang Y.-Q."/>
            <person name="Ren S.-X."/>
            <person name="Li H.-L."/>
            <person name="Wang Y.-X."/>
            <person name="Fu G."/>
            <person name="Yang J."/>
            <person name="Qin Z.-Q."/>
            <person name="Miao Y.-G."/>
            <person name="Wang W.-Y."/>
            <person name="Chen R.-S."/>
            <person name="Shen Y."/>
            <person name="Chen Z."/>
            <person name="Yuan Z.-H."/>
            <person name="Zhao G.-P."/>
            <person name="Qu D."/>
            <person name="Danchin A."/>
            <person name="Wen Y.-M."/>
        </authorList>
    </citation>
    <scope>NUCLEOTIDE SEQUENCE [LARGE SCALE GENOMIC DNA]</scope>
    <source>
        <strain>ATCC 12228 / FDA PCI 1200</strain>
    </source>
</reference>
<organism>
    <name type="scientific">Staphylococcus epidermidis (strain ATCC 12228 / FDA PCI 1200)</name>
    <dbReference type="NCBI Taxonomy" id="176280"/>
    <lineage>
        <taxon>Bacteria</taxon>
        <taxon>Bacillati</taxon>
        <taxon>Bacillota</taxon>
        <taxon>Bacilli</taxon>
        <taxon>Bacillales</taxon>
        <taxon>Staphylococcaceae</taxon>
        <taxon>Staphylococcus</taxon>
    </lineage>
</organism>
<accession>Q8CP86</accession>
<keyword id="KW-0029">Amino-acid transport</keyword>
<keyword id="KW-1003">Cell membrane</keyword>
<keyword id="KW-0472">Membrane</keyword>
<keyword id="KW-0812">Transmembrane</keyword>
<keyword id="KW-1133">Transmembrane helix</keyword>
<keyword id="KW-0813">Transport</keyword>
<feature type="chain" id="PRO_0000294020" description="Putative branched-chain amino acid carrier protein SE_1090">
    <location>
        <begin position="1"/>
        <end position="447"/>
    </location>
</feature>
<feature type="transmembrane region" description="Helical" evidence="1">
    <location>
        <begin position="5"/>
        <end position="25"/>
    </location>
</feature>
<feature type="transmembrane region" description="Helical" evidence="1">
    <location>
        <begin position="40"/>
        <end position="60"/>
    </location>
</feature>
<feature type="transmembrane region" description="Helical" evidence="1">
    <location>
        <begin position="74"/>
        <end position="94"/>
    </location>
</feature>
<feature type="transmembrane region" description="Helical" evidence="1">
    <location>
        <begin position="114"/>
        <end position="134"/>
    </location>
</feature>
<feature type="transmembrane region" description="Helical" evidence="1">
    <location>
        <begin position="143"/>
        <end position="163"/>
    </location>
</feature>
<feature type="transmembrane region" description="Helical" evidence="1">
    <location>
        <begin position="193"/>
        <end position="213"/>
    </location>
</feature>
<feature type="transmembrane region" description="Helical" evidence="1">
    <location>
        <begin position="229"/>
        <end position="249"/>
    </location>
</feature>
<feature type="transmembrane region" description="Helical" evidence="1">
    <location>
        <begin position="290"/>
        <end position="310"/>
    </location>
</feature>
<feature type="transmembrane region" description="Helical" evidence="1">
    <location>
        <begin position="317"/>
        <end position="337"/>
    </location>
</feature>
<feature type="transmembrane region" description="Helical" evidence="1">
    <location>
        <begin position="350"/>
        <end position="370"/>
    </location>
</feature>
<feature type="transmembrane region" description="Helical" evidence="1">
    <location>
        <begin position="382"/>
        <end position="402"/>
    </location>
</feature>
<feature type="transmembrane region" description="Helical" evidence="1">
    <location>
        <begin position="417"/>
        <end position="437"/>
    </location>
</feature>
<protein>
    <recommendedName>
        <fullName>Putative branched-chain amino acid carrier protein SE_1090</fullName>
    </recommendedName>
</protein>
<sequence length="447" mass="49154">MNKNTWIIGFTLFAMFFGAGNLIFPTQLGLESGHFFWPAILAFALTGIGLPLLGVVVGALDKHGYIGSFNKISPRFSLIFLIIIYLTIGPLFAIPRTASTSFEMSVTPIAQNSGNLALFIFTVIYFLIVLYLCLNPNKMIDRIGSLLTPLLLITIVAMIIKGFVDFSGHSSNYGMTNAYHSNLSGFSQGFTQGYLTMDAIASIAFSMIVVNAIKTTGIQHADKIFKQTIIAGLIAAIALVFIYISLGYIGNHINIPSDTLKELKAKDQNIGTYLLTTMATKGFGTFGKYLLGIIVSLACLTTACGLIVSVSEYFHRILPKIPYKVFVIFFILVSFILANQGLNSVIKMSVPVLSVIYPVAITVILLILIARFIPTKRIAQQIPLIIVAIESILSLITTQGWIRISFIDDLPLKEYSLEWFPIAVVATLVGYMISYFVKQSNIVYQKE</sequence>
<gene>
    <name type="ordered locus">SE_1090</name>
</gene>
<proteinExistence type="inferred from homology"/>
<evidence type="ECO:0000255" key="1"/>
<evidence type="ECO:0000305" key="2"/>
<name>BRNQL_STAES</name>